<name>Y411_STAAC</name>
<protein>
    <recommendedName>
        <fullName>UPF0324 membrane protein SACOL0411</fullName>
    </recommendedName>
</protein>
<organism>
    <name type="scientific">Staphylococcus aureus (strain COL)</name>
    <dbReference type="NCBI Taxonomy" id="93062"/>
    <lineage>
        <taxon>Bacteria</taxon>
        <taxon>Bacillati</taxon>
        <taxon>Bacillota</taxon>
        <taxon>Bacilli</taxon>
        <taxon>Bacillales</taxon>
        <taxon>Staphylococcaceae</taxon>
        <taxon>Staphylococcus</taxon>
    </lineage>
</organism>
<sequence>MASLKNKHFMIGLSLTFIVALFSFLAAKLPILDKVGALTIAILIAILYRHFRGYPEQYSSGITFSSKYLLRFAIILYGLKLNIFDIIGQGSKLLAIDVGVVIFSIVMMLFVNKLLHGDKNIALLLGVGTGVCGAAAIAAVAPIFKSREKDTAISIGIIALIGTIFSLIYTAIYAIFSMTTNVYGAWSGVSLHEIAHVVLAGGFGGSDALKIALLGKLGRVFLLIPLTIVLILIMRFRSSESSSKGRISIPYFLIGFVIMALVNTYVTIPSALLNILNTVSTICLLMAMVALGLNVAFKDLKNRALKPLMTIIITSICLSSLAFIVVHWLYS</sequence>
<feature type="chain" id="PRO_0000157451" description="UPF0324 membrane protein SACOL0411">
    <location>
        <begin position="1"/>
        <end position="331"/>
    </location>
</feature>
<feature type="transmembrane region" description="Helical" evidence="1">
    <location>
        <begin position="9"/>
        <end position="26"/>
    </location>
</feature>
<feature type="transmembrane region" description="Helical" evidence="1">
    <location>
        <begin position="31"/>
        <end position="48"/>
    </location>
</feature>
<feature type="transmembrane region" description="Helical" evidence="1">
    <location>
        <begin position="69"/>
        <end position="88"/>
    </location>
</feature>
<feature type="transmembrane region" description="Helical" evidence="1">
    <location>
        <begin position="93"/>
        <end position="115"/>
    </location>
</feature>
<feature type="transmembrane region" description="Helical" evidence="1">
    <location>
        <begin position="122"/>
        <end position="144"/>
    </location>
</feature>
<feature type="transmembrane region" description="Helical" evidence="1">
    <location>
        <begin position="154"/>
        <end position="176"/>
    </location>
</feature>
<feature type="transmembrane region" description="Helical" evidence="1">
    <location>
        <begin position="183"/>
        <end position="202"/>
    </location>
</feature>
<feature type="transmembrane region" description="Helical" evidence="1">
    <location>
        <begin position="217"/>
        <end position="234"/>
    </location>
</feature>
<feature type="transmembrane region" description="Helical" evidence="1">
    <location>
        <begin position="247"/>
        <end position="269"/>
    </location>
</feature>
<feature type="transmembrane region" description="Helical" evidence="1">
    <location>
        <begin position="273"/>
        <end position="295"/>
    </location>
</feature>
<feature type="transmembrane region" description="Helical" evidence="1">
    <location>
        <begin position="308"/>
        <end position="330"/>
    </location>
</feature>
<proteinExistence type="inferred from homology"/>
<evidence type="ECO:0000255" key="1"/>
<evidence type="ECO:0000305" key="2"/>
<keyword id="KW-1003">Cell membrane</keyword>
<keyword id="KW-0472">Membrane</keyword>
<keyword id="KW-0812">Transmembrane</keyword>
<keyword id="KW-1133">Transmembrane helix</keyword>
<accession>Q5HIV4</accession>
<gene>
    <name type="ordered locus">SACOL0411</name>
</gene>
<comment type="subcellular location">
    <subcellularLocation>
        <location evidence="2">Cell membrane</location>
        <topology evidence="2">Multi-pass membrane protein</topology>
    </subcellularLocation>
</comment>
<comment type="similarity">
    <text evidence="2">Belongs to the UPF0324 family.</text>
</comment>
<dbReference type="EMBL" id="CP000046">
    <property type="protein sequence ID" value="AAW38880.1"/>
    <property type="molecule type" value="Genomic_DNA"/>
</dbReference>
<dbReference type="RefSeq" id="WP_000157629.1">
    <property type="nucleotide sequence ID" value="NZ_JBGOFO010000001.1"/>
</dbReference>
<dbReference type="KEGG" id="sac:SACOL0411"/>
<dbReference type="HOGENOM" id="CLU_033541_0_1_9"/>
<dbReference type="Proteomes" id="UP000000530">
    <property type="component" value="Chromosome"/>
</dbReference>
<dbReference type="GO" id="GO:0005886">
    <property type="term" value="C:plasma membrane"/>
    <property type="evidence" value="ECO:0007669"/>
    <property type="project" value="UniProtKB-SubCell"/>
</dbReference>
<dbReference type="InterPro" id="IPR018383">
    <property type="entry name" value="UPF0324_pro"/>
</dbReference>
<dbReference type="PANTHER" id="PTHR30106">
    <property type="entry name" value="INNER MEMBRANE PROTEIN YEIH-RELATED"/>
    <property type="match status" value="1"/>
</dbReference>
<dbReference type="PANTHER" id="PTHR30106:SF2">
    <property type="entry name" value="UPF0324 INNER MEMBRANE PROTEIN YEIH"/>
    <property type="match status" value="1"/>
</dbReference>
<dbReference type="Pfam" id="PF03601">
    <property type="entry name" value="Cons_hypoth698"/>
    <property type="match status" value="1"/>
</dbReference>
<reference key="1">
    <citation type="journal article" date="2005" name="J. Bacteriol.">
        <title>Insights on evolution of virulence and resistance from the complete genome analysis of an early methicillin-resistant Staphylococcus aureus strain and a biofilm-producing methicillin-resistant Staphylococcus epidermidis strain.</title>
        <authorList>
            <person name="Gill S.R."/>
            <person name="Fouts D.E."/>
            <person name="Archer G.L."/>
            <person name="Mongodin E.F."/>
            <person name="DeBoy R.T."/>
            <person name="Ravel J."/>
            <person name="Paulsen I.T."/>
            <person name="Kolonay J.F."/>
            <person name="Brinkac L.M."/>
            <person name="Beanan M.J."/>
            <person name="Dodson R.J."/>
            <person name="Daugherty S.C."/>
            <person name="Madupu R."/>
            <person name="Angiuoli S.V."/>
            <person name="Durkin A.S."/>
            <person name="Haft D.H."/>
            <person name="Vamathevan J.J."/>
            <person name="Khouri H."/>
            <person name="Utterback T.R."/>
            <person name="Lee C."/>
            <person name="Dimitrov G."/>
            <person name="Jiang L."/>
            <person name="Qin H."/>
            <person name="Weidman J."/>
            <person name="Tran K."/>
            <person name="Kang K.H."/>
            <person name="Hance I.R."/>
            <person name="Nelson K.E."/>
            <person name="Fraser C.M."/>
        </authorList>
    </citation>
    <scope>NUCLEOTIDE SEQUENCE [LARGE SCALE GENOMIC DNA]</scope>
    <source>
        <strain>COL</strain>
    </source>
</reference>